<protein>
    <recommendedName>
        <fullName evidence="1">Trigger factor</fullName>
        <shortName evidence="1">TF</shortName>
        <ecNumber evidence="1">5.2.1.8</ecNumber>
    </recommendedName>
    <alternativeName>
        <fullName evidence="1">PPIase</fullName>
    </alternativeName>
</protein>
<gene>
    <name evidence="1" type="primary">tig</name>
    <name type="ordered locus">SPs0232</name>
</gene>
<feature type="chain" id="PRO_0000411589" description="Trigger factor">
    <location>
        <begin position="1"/>
        <end position="427"/>
    </location>
</feature>
<feature type="domain" description="PPIase FKBP-type" evidence="1">
    <location>
        <begin position="163"/>
        <end position="248"/>
    </location>
</feature>
<evidence type="ECO:0000255" key="1">
    <source>
        <dbReference type="HAMAP-Rule" id="MF_00303"/>
    </source>
</evidence>
<keyword id="KW-0131">Cell cycle</keyword>
<keyword id="KW-0132">Cell division</keyword>
<keyword id="KW-0143">Chaperone</keyword>
<keyword id="KW-0963">Cytoplasm</keyword>
<keyword id="KW-0413">Isomerase</keyword>
<keyword id="KW-0697">Rotamase</keyword>
<proteinExistence type="inferred from homology"/>
<comment type="function">
    <text evidence="1">Involved in protein export. Acts as a chaperone by maintaining the newly synthesized protein in an open conformation. Functions as a peptidyl-prolyl cis-trans isomerase.</text>
</comment>
<comment type="catalytic activity">
    <reaction evidence="1">
        <text>[protein]-peptidylproline (omega=180) = [protein]-peptidylproline (omega=0)</text>
        <dbReference type="Rhea" id="RHEA:16237"/>
        <dbReference type="Rhea" id="RHEA-COMP:10747"/>
        <dbReference type="Rhea" id="RHEA-COMP:10748"/>
        <dbReference type="ChEBI" id="CHEBI:83833"/>
        <dbReference type="ChEBI" id="CHEBI:83834"/>
        <dbReference type="EC" id="5.2.1.8"/>
    </reaction>
</comment>
<comment type="subcellular location">
    <subcellularLocation>
        <location>Cytoplasm</location>
    </subcellularLocation>
    <text evidence="1">About half TF is bound to the ribosome near the polypeptide exit tunnel while the other half is free in the cytoplasm.</text>
</comment>
<comment type="domain">
    <text evidence="1">Consists of 3 domains; the N-terminus binds the ribosome, the middle domain has PPIase activity, while the C-terminus has intrinsic chaperone activity on its own.</text>
</comment>
<comment type="similarity">
    <text evidence="1">Belongs to the FKBP-type PPIase family. Tig subfamily.</text>
</comment>
<name>TIG_STRPQ</name>
<organism>
    <name type="scientific">Streptococcus pyogenes serotype M3 (strain SSI-1)</name>
    <dbReference type="NCBI Taxonomy" id="193567"/>
    <lineage>
        <taxon>Bacteria</taxon>
        <taxon>Bacillati</taxon>
        <taxon>Bacillota</taxon>
        <taxon>Bacilli</taxon>
        <taxon>Lactobacillales</taxon>
        <taxon>Streptococcaceae</taxon>
        <taxon>Streptococcus</taxon>
    </lineage>
</organism>
<accession>P0DF99</accession>
<accession>Q879L7</accession>
<sequence>MSTSFENKATNRGVITFTISQDKIKPALDKAFNKIKKDLNAPGFRKGHMPRPVFNQKFGEEVLYEDALNIVLPEAYEAAVTELGLDVVAQPKIDVVSMEKGKEWTLSAEVVTKPEVKLGDYKNLVVEVDASKEVSDEDVDAKIERERQNLAELIIKDGEAAQGDTVVIDFVGSVDGVEFDGGKGDNFSLELGSGQFIPGFEDQLVGAKAGDEVEVNVTFPESYQAEDLAGKAAKFMTTIHEVKTKEVPELDDELAKDIDEDVDTLEDLKVKYRKELEAAQETAYDDAVEGAAIELAVANAEIVDLPEEMIHEEVNRSVNEFMGNMQRQGISPEMYFQLTGTTQEDLHNQYSAEADKRVKTNLVIEAIAKAEGFEATDSEIEQEINDLATEYNMPADQVRSLLSADMLKHDIAMKKAVEVITSTASVK</sequence>
<reference key="1">
    <citation type="journal article" date="2003" name="Genome Res.">
        <title>Genome sequence of an M3 strain of Streptococcus pyogenes reveals a large-scale genomic rearrangement in invasive strains and new insights into phage evolution.</title>
        <authorList>
            <person name="Nakagawa I."/>
            <person name="Kurokawa K."/>
            <person name="Yamashita A."/>
            <person name="Nakata M."/>
            <person name="Tomiyasu Y."/>
            <person name="Okahashi N."/>
            <person name="Kawabata S."/>
            <person name="Yamazaki K."/>
            <person name="Shiba T."/>
            <person name="Yasunaga T."/>
            <person name="Hayashi H."/>
            <person name="Hattori M."/>
            <person name="Hamada S."/>
        </authorList>
    </citation>
    <scope>NUCLEOTIDE SEQUENCE [LARGE SCALE GENOMIC DNA]</scope>
    <source>
        <strain>SSI-1</strain>
    </source>
</reference>
<dbReference type="EC" id="5.2.1.8" evidence="1"/>
<dbReference type="EMBL" id="BA000034">
    <property type="protein sequence ID" value="BAC63327.1"/>
    <property type="molecule type" value="Genomic_DNA"/>
</dbReference>
<dbReference type="RefSeq" id="WP_011054989.1">
    <property type="nucleotide sequence ID" value="NC_004606.1"/>
</dbReference>
<dbReference type="SMR" id="P0DF99"/>
<dbReference type="KEGG" id="sps:SPs0232"/>
<dbReference type="HOGENOM" id="CLU_033058_3_2_9"/>
<dbReference type="GO" id="GO:0005737">
    <property type="term" value="C:cytoplasm"/>
    <property type="evidence" value="ECO:0007669"/>
    <property type="project" value="UniProtKB-SubCell"/>
</dbReference>
<dbReference type="GO" id="GO:0003755">
    <property type="term" value="F:peptidyl-prolyl cis-trans isomerase activity"/>
    <property type="evidence" value="ECO:0007669"/>
    <property type="project" value="UniProtKB-UniRule"/>
</dbReference>
<dbReference type="GO" id="GO:0044183">
    <property type="term" value="F:protein folding chaperone"/>
    <property type="evidence" value="ECO:0007669"/>
    <property type="project" value="TreeGrafter"/>
</dbReference>
<dbReference type="GO" id="GO:0043022">
    <property type="term" value="F:ribosome binding"/>
    <property type="evidence" value="ECO:0007669"/>
    <property type="project" value="TreeGrafter"/>
</dbReference>
<dbReference type="GO" id="GO:0051083">
    <property type="term" value="P:'de novo' cotranslational protein folding"/>
    <property type="evidence" value="ECO:0007669"/>
    <property type="project" value="TreeGrafter"/>
</dbReference>
<dbReference type="GO" id="GO:0051301">
    <property type="term" value="P:cell division"/>
    <property type="evidence" value="ECO:0007669"/>
    <property type="project" value="UniProtKB-KW"/>
</dbReference>
<dbReference type="GO" id="GO:0061077">
    <property type="term" value="P:chaperone-mediated protein folding"/>
    <property type="evidence" value="ECO:0007669"/>
    <property type="project" value="TreeGrafter"/>
</dbReference>
<dbReference type="GO" id="GO:0015031">
    <property type="term" value="P:protein transport"/>
    <property type="evidence" value="ECO:0007669"/>
    <property type="project" value="UniProtKB-UniRule"/>
</dbReference>
<dbReference type="GO" id="GO:0043335">
    <property type="term" value="P:protein unfolding"/>
    <property type="evidence" value="ECO:0007669"/>
    <property type="project" value="TreeGrafter"/>
</dbReference>
<dbReference type="FunFam" id="3.10.50.40:FF:000001">
    <property type="entry name" value="Trigger factor"/>
    <property type="match status" value="1"/>
</dbReference>
<dbReference type="Gene3D" id="3.10.50.40">
    <property type="match status" value="1"/>
</dbReference>
<dbReference type="Gene3D" id="3.30.70.1050">
    <property type="entry name" value="Trigger factor ribosome-binding domain"/>
    <property type="match status" value="1"/>
</dbReference>
<dbReference type="Gene3D" id="1.10.3120.10">
    <property type="entry name" value="Trigger factor, C-terminal domain"/>
    <property type="match status" value="1"/>
</dbReference>
<dbReference type="HAMAP" id="MF_00303">
    <property type="entry name" value="Trigger_factor_Tig"/>
    <property type="match status" value="1"/>
</dbReference>
<dbReference type="InterPro" id="IPR046357">
    <property type="entry name" value="PPIase_dom_sf"/>
</dbReference>
<dbReference type="InterPro" id="IPR001179">
    <property type="entry name" value="PPIase_FKBP_dom"/>
</dbReference>
<dbReference type="InterPro" id="IPR005215">
    <property type="entry name" value="Trig_fac"/>
</dbReference>
<dbReference type="InterPro" id="IPR008880">
    <property type="entry name" value="Trigger_fac_C"/>
</dbReference>
<dbReference type="InterPro" id="IPR037041">
    <property type="entry name" value="Trigger_fac_C_sf"/>
</dbReference>
<dbReference type="InterPro" id="IPR008881">
    <property type="entry name" value="Trigger_fac_ribosome-bd_bac"/>
</dbReference>
<dbReference type="InterPro" id="IPR036611">
    <property type="entry name" value="Trigger_fac_ribosome-bd_sf"/>
</dbReference>
<dbReference type="InterPro" id="IPR027304">
    <property type="entry name" value="Trigger_fact/SurA_dom_sf"/>
</dbReference>
<dbReference type="NCBIfam" id="TIGR00115">
    <property type="entry name" value="tig"/>
    <property type="match status" value="1"/>
</dbReference>
<dbReference type="PANTHER" id="PTHR30560">
    <property type="entry name" value="TRIGGER FACTOR CHAPERONE AND PEPTIDYL-PROLYL CIS/TRANS ISOMERASE"/>
    <property type="match status" value="1"/>
</dbReference>
<dbReference type="PANTHER" id="PTHR30560:SF3">
    <property type="entry name" value="TRIGGER FACTOR-LIKE PROTEIN TIG, CHLOROPLASTIC"/>
    <property type="match status" value="1"/>
</dbReference>
<dbReference type="Pfam" id="PF00254">
    <property type="entry name" value="FKBP_C"/>
    <property type="match status" value="1"/>
</dbReference>
<dbReference type="Pfam" id="PF05698">
    <property type="entry name" value="Trigger_C"/>
    <property type="match status" value="1"/>
</dbReference>
<dbReference type="Pfam" id="PF05697">
    <property type="entry name" value="Trigger_N"/>
    <property type="match status" value="1"/>
</dbReference>
<dbReference type="PIRSF" id="PIRSF003095">
    <property type="entry name" value="Trigger_factor"/>
    <property type="match status" value="1"/>
</dbReference>
<dbReference type="SUPFAM" id="SSF54534">
    <property type="entry name" value="FKBP-like"/>
    <property type="match status" value="1"/>
</dbReference>
<dbReference type="SUPFAM" id="SSF109998">
    <property type="entry name" value="Triger factor/SurA peptide-binding domain-like"/>
    <property type="match status" value="1"/>
</dbReference>
<dbReference type="SUPFAM" id="SSF102735">
    <property type="entry name" value="Trigger factor ribosome-binding domain"/>
    <property type="match status" value="1"/>
</dbReference>
<dbReference type="PROSITE" id="PS50059">
    <property type="entry name" value="FKBP_PPIASE"/>
    <property type="match status" value="1"/>
</dbReference>